<feature type="chain" id="PRO_1000019000" description="1-deoxy-D-xylulose-5-phosphate synthase">
    <location>
        <begin position="1"/>
        <end position="617"/>
    </location>
</feature>
<feature type="binding site" evidence="1">
    <location>
        <position position="77"/>
    </location>
    <ligand>
        <name>thiamine diphosphate</name>
        <dbReference type="ChEBI" id="CHEBI:58937"/>
    </ligand>
</feature>
<feature type="binding site" evidence="1">
    <location>
        <begin position="118"/>
        <end position="120"/>
    </location>
    <ligand>
        <name>thiamine diphosphate</name>
        <dbReference type="ChEBI" id="CHEBI:58937"/>
    </ligand>
</feature>
<feature type="binding site" evidence="1">
    <location>
        <position position="149"/>
    </location>
    <ligand>
        <name>Mg(2+)</name>
        <dbReference type="ChEBI" id="CHEBI:18420"/>
    </ligand>
</feature>
<feature type="binding site" evidence="1">
    <location>
        <begin position="150"/>
        <end position="151"/>
    </location>
    <ligand>
        <name>thiamine diphosphate</name>
        <dbReference type="ChEBI" id="CHEBI:58937"/>
    </ligand>
</feature>
<feature type="binding site" evidence="1">
    <location>
        <position position="178"/>
    </location>
    <ligand>
        <name>Mg(2+)</name>
        <dbReference type="ChEBI" id="CHEBI:18420"/>
    </ligand>
</feature>
<feature type="binding site" evidence="1">
    <location>
        <position position="178"/>
    </location>
    <ligand>
        <name>thiamine diphosphate</name>
        <dbReference type="ChEBI" id="CHEBI:58937"/>
    </ligand>
</feature>
<feature type="binding site" evidence="1">
    <location>
        <position position="286"/>
    </location>
    <ligand>
        <name>thiamine diphosphate</name>
        <dbReference type="ChEBI" id="CHEBI:58937"/>
    </ligand>
</feature>
<feature type="binding site" evidence="1">
    <location>
        <position position="367"/>
    </location>
    <ligand>
        <name>thiamine diphosphate</name>
        <dbReference type="ChEBI" id="CHEBI:58937"/>
    </ligand>
</feature>
<name>DXS_ACTP2</name>
<accession>A3MYS9</accession>
<organism>
    <name type="scientific">Actinobacillus pleuropneumoniae serotype 5b (strain L20)</name>
    <dbReference type="NCBI Taxonomy" id="416269"/>
    <lineage>
        <taxon>Bacteria</taxon>
        <taxon>Pseudomonadati</taxon>
        <taxon>Pseudomonadota</taxon>
        <taxon>Gammaproteobacteria</taxon>
        <taxon>Pasteurellales</taxon>
        <taxon>Pasteurellaceae</taxon>
        <taxon>Actinobacillus</taxon>
    </lineage>
</organism>
<protein>
    <recommendedName>
        <fullName evidence="1">1-deoxy-D-xylulose-5-phosphate synthase</fullName>
        <ecNumber evidence="1">2.2.1.7</ecNumber>
    </recommendedName>
    <alternativeName>
        <fullName evidence="1">1-deoxyxylulose-5-phosphate synthase</fullName>
        <shortName evidence="1">DXP synthase</shortName>
        <shortName evidence="1">DXPS</shortName>
    </alternativeName>
</protein>
<keyword id="KW-0414">Isoprene biosynthesis</keyword>
<keyword id="KW-0460">Magnesium</keyword>
<keyword id="KW-0479">Metal-binding</keyword>
<keyword id="KW-1185">Reference proteome</keyword>
<keyword id="KW-0784">Thiamine biosynthesis</keyword>
<keyword id="KW-0786">Thiamine pyrophosphate</keyword>
<keyword id="KW-0808">Transferase</keyword>
<reference key="1">
    <citation type="journal article" date="2008" name="J. Bacteriol.">
        <title>The complete genome sequence of Actinobacillus pleuropneumoniae L20 (serotype 5b).</title>
        <authorList>
            <person name="Foote S.J."/>
            <person name="Bosse J.T."/>
            <person name="Bouevitch A.B."/>
            <person name="Langford P.R."/>
            <person name="Young N.M."/>
            <person name="Nash J.H.E."/>
        </authorList>
    </citation>
    <scope>NUCLEOTIDE SEQUENCE [LARGE SCALE GENOMIC DNA]</scope>
    <source>
        <strain>L20</strain>
    </source>
</reference>
<sequence>MQNKYPLLSQINSPEDLRLLAKEQLQSVADELRAYLLESVSQTSGHLASGLGVVELTVALHYVYQTPFDQLIWDVGHQAYPHKILTGRRDQMHTIRQKNGIHPFPWREESLYDVLSVGHSSTSISAGVGIAVAAEKENAGRKTVCVIGDGAITAGMAFEAMNHAGALHTDMLVILNDNEMSISENVGALNNHLARIFSGSIYTTVRDGSKKVLDKVPTIKNFMKKSEEHMKGVISPESTLFEELGFNYIGPIDGHNIDELVKTLSNMRELKGPQFLHIRTKKGKGYEPAENDPIGYHGVPKFDPTCGQLPKSKTIPTYSDIFGNWLCEMAEQDSKLIGITPAMREGSGMVEFSKRFPEQYFDVAIAEQHAVTFGAGLAIAGYKPVVAIYSSFLQRAYDQLIHDVAIQNLPVIFAIDRAGIVGADGQTHQGAFDVSFMRCIPNMTIMCPSDENEMRQMLYTAYRMNTPTAVRYPRGNAQGVALAPMQALEVGKGKLIQQGQKVAILNFGPLLNEARIVAEKHNYTLADMRFVKPLDEQLVAELADSHELLVTLEENAIQGGAGSAVNEYLQKIGKIRPLVMLGIPDFFVPQATQAESYADLGLDAAGIEQRIQAVVNQ</sequence>
<dbReference type="EC" id="2.2.1.7" evidence="1"/>
<dbReference type="EMBL" id="CP000569">
    <property type="protein sequence ID" value="ABN73315.1"/>
    <property type="molecule type" value="Genomic_DNA"/>
</dbReference>
<dbReference type="RefSeq" id="WP_005595991.1">
    <property type="nucleotide sequence ID" value="NC_009053.1"/>
</dbReference>
<dbReference type="SMR" id="A3MYS9"/>
<dbReference type="STRING" id="416269.APL_0207"/>
<dbReference type="EnsemblBacteria" id="ABN73315">
    <property type="protein sequence ID" value="ABN73315"/>
    <property type="gene ID" value="APL_0207"/>
</dbReference>
<dbReference type="GeneID" id="48598354"/>
<dbReference type="KEGG" id="apl:APL_0207"/>
<dbReference type="eggNOG" id="COG1154">
    <property type="taxonomic scope" value="Bacteria"/>
</dbReference>
<dbReference type="HOGENOM" id="CLU_009227_1_4_6"/>
<dbReference type="UniPathway" id="UPA00064">
    <property type="reaction ID" value="UER00091"/>
</dbReference>
<dbReference type="Proteomes" id="UP000001432">
    <property type="component" value="Chromosome"/>
</dbReference>
<dbReference type="GO" id="GO:0005829">
    <property type="term" value="C:cytosol"/>
    <property type="evidence" value="ECO:0007669"/>
    <property type="project" value="TreeGrafter"/>
</dbReference>
<dbReference type="GO" id="GO:0008661">
    <property type="term" value="F:1-deoxy-D-xylulose-5-phosphate synthase activity"/>
    <property type="evidence" value="ECO:0007669"/>
    <property type="project" value="UniProtKB-UniRule"/>
</dbReference>
<dbReference type="GO" id="GO:0000287">
    <property type="term" value="F:magnesium ion binding"/>
    <property type="evidence" value="ECO:0007669"/>
    <property type="project" value="UniProtKB-UniRule"/>
</dbReference>
<dbReference type="GO" id="GO:0030976">
    <property type="term" value="F:thiamine pyrophosphate binding"/>
    <property type="evidence" value="ECO:0007669"/>
    <property type="project" value="UniProtKB-UniRule"/>
</dbReference>
<dbReference type="GO" id="GO:0052865">
    <property type="term" value="P:1-deoxy-D-xylulose 5-phosphate biosynthetic process"/>
    <property type="evidence" value="ECO:0007669"/>
    <property type="project" value="UniProtKB-UniPathway"/>
</dbReference>
<dbReference type="GO" id="GO:0019288">
    <property type="term" value="P:isopentenyl diphosphate biosynthetic process, methylerythritol 4-phosphate pathway"/>
    <property type="evidence" value="ECO:0007669"/>
    <property type="project" value="TreeGrafter"/>
</dbReference>
<dbReference type="GO" id="GO:0016114">
    <property type="term" value="P:terpenoid biosynthetic process"/>
    <property type="evidence" value="ECO:0007669"/>
    <property type="project" value="UniProtKB-UniRule"/>
</dbReference>
<dbReference type="GO" id="GO:0009228">
    <property type="term" value="P:thiamine biosynthetic process"/>
    <property type="evidence" value="ECO:0007669"/>
    <property type="project" value="UniProtKB-UniRule"/>
</dbReference>
<dbReference type="CDD" id="cd02007">
    <property type="entry name" value="TPP_DXS"/>
    <property type="match status" value="1"/>
</dbReference>
<dbReference type="CDD" id="cd07033">
    <property type="entry name" value="TPP_PYR_DXS_TK_like"/>
    <property type="match status" value="1"/>
</dbReference>
<dbReference type="FunFam" id="3.40.50.920:FF:000002">
    <property type="entry name" value="1-deoxy-D-xylulose-5-phosphate synthase"/>
    <property type="match status" value="1"/>
</dbReference>
<dbReference type="FunFam" id="3.40.50.970:FF:000005">
    <property type="entry name" value="1-deoxy-D-xylulose-5-phosphate synthase"/>
    <property type="match status" value="1"/>
</dbReference>
<dbReference type="Gene3D" id="3.40.50.920">
    <property type="match status" value="1"/>
</dbReference>
<dbReference type="Gene3D" id="3.40.50.970">
    <property type="match status" value="2"/>
</dbReference>
<dbReference type="HAMAP" id="MF_00315">
    <property type="entry name" value="DXP_synth"/>
    <property type="match status" value="1"/>
</dbReference>
<dbReference type="InterPro" id="IPR005477">
    <property type="entry name" value="Dxylulose-5-P_synthase"/>
</dbReference>
<dbReference type="InterPro" id="IPR029061">
    <property type="entry name" value="THDP-binding"/>
</dbReference>
<dbReference type="InterPro" id="IPR009014">
    <property type="entry name" value="Transketo_C/PFOR_II"/>
</dbReference>
<dbReference type="InterPro" id="IPR005475">
    <property type="entry name" value="Transketolase-like_Pyr-bd"/>
</dbReference>
<dbReference type="InterPro" id="IPR020826">
    <property type="entry name" value="Transketolase_BS"/>
</dbReference>
<dbReference type="InterPro" id="IPR033248">
    <property type="entry name" value="Transketolase_C"/>
</dbReference>
<dbReference type="InterPro" id="IPR049557">
    <property type="entry name" value="Transketolase_CS"/>
</dbReference>
<dbReference type="NCBIfam" id="TIGR00204">
    <property type="entry name" value="dxs"/>
    <property type="match status" value="1"/>
</dbReference>
<dbReference type="NCBIfam" id="NF003933">
    <property type="entry name" value="PRK05444.2-2"/>
    <property type="match status" value="1"/>
</dbReference>
<dbReference type="PANTHER" id="PTHR43322">
    <property type="entry name" value="1-D-DEOXYXYLULOSE 5-PHOSPHATE SYNTHASE-RELATED"/>
    <property type="match status" value="1"/>
</dbReference>
<dbReference type="PANTHER" id="PTHR43322:SF5">
    <property type="entry name" value="1-DEOXY-D-XYLULOSE-5-PHOSPHATE SYNTHASE, CHLOROPLASTIC"/>
    <property type="match status" value="1"/>
</dbReference>
<dbReference type="Pfam" id="PF13292">
    <property type="entry name" value="DXP_synthase_N"/>
    <property type="match status" value="1"/>
</dbReference>
<dbReference type="Pfam" id="PF02779">
    <property type="entry name" value="Transket_pyr"/>
    <property type="match status" value="1"/>
</dbReference>
<dbReference type="Pfam" id="PF02780">
    <property type="entry name" value="Transketolase_C"/>
    <property type="match status" value="1"/>
</dbReference>
<dbReference type="SMART" id="SM00861">
    <property type="entry name" value="Transket_pyr"/>
    <property type="match status" value="1"/>
</dbReference>
<dbReference type="SUPFAM" id="SSF52518">
    <property type="entry name" value="Thiamin diphosphate-binding fold (THDP-binding)"/>
    <property type="match status" value="2"/>
</dbReference>
<dbReference type="SUPFAM" id="SSF52922">
    <property type="entry name" value="TK C-terminal domain-like"/>
    <property type="match status" value="1"/>
</dbReference>
<dbReference type="PROSITE" id="PS00801">
    <property type="entry name" value="TRANSKETOLASE_1"/>
    <property type="match status" value="1"/>
</dbReference>
<dbReference type="PROSITE" id="PS00802">
    <property type="entry name" value="TRANSKETOLASE_2"/>
    <property type="match status" value="1"/>
</dbReference>
<proteinExistence type="inferred from homology"/>
<evidence type="ECO:0000255" key="1">
    <source>
        <dbReference type="HAMAP-Rule" id="MF_00315"/>
    </source>
</evidence>
<gene>
    <name evidence="1" type="primary">dxs</name>
    <name type="ordered locus">APL_0207</name>
</gene>
<comment type="function">
    <text evidence="1">Catalyzes the acyloin condensation reaction between C atoms 2 and 3 of pyruvate and glyceraldehyde 3-phosphate to yield 1-deoxy-D-xylulose-5-phosphate (DXP).</text>
</comment>
<comment type="catalytic activity">
    <reaction evidence="1">
        <text>D-glyceraldehyde 3-phosphate + pyruvate + H(+) = 1-deoxy-D-xylulose 5-phosphate + CO2</text>
        <dbReference type="Rhea" id="RHEA:12605"/>
        <dbReference type="ChEBI" id="CHEBI:15361"/>
        <dbReference type="ChEBI" id="CHEBI:15378"/>
        <dbReference type="ChEBI" id="CHEBI:16526"/>
        <dbReference type="ChEBI" id="CHEBI:57792"/>
        <dbReference type="ChEBI" id="CHEBI:59776"/>
        <dbReference type="EC" id="2.2.1.7"/>
    </reaction>
</comment>
<comment type="cofactor">
    <cofactor evidence="1">
        <name>Mg(2+)</name>
        <dbReference type="ChEBI" id="CHEBI:18420"/>
    </cofactor>
    <text evidence="1">Binds 1 Mg(2+) ion per subunit.</text>
</comment>
<comment type="cofactor">
    <cofactor evidence="1">
        <name>thiamine diphosphate</name>
        <dbReference type="ChEBI" id="CHEBI:58937"/>
    </cofactor>
    <text evidence="1">Binds 1 thiamine pyrophosphate per subunit.</text>
</comment>
<comment type="pathway">
    <text evidence="1">Metabolic intermediate biosynthesis; 1-deoxy-D-xylulose 5-phosphate biosynthesis; 1-deoxy-D-xylulose 5-phosphate from D-glyceraldehyde 3-phosphate and pyruvate: step 1/1.</text>
</comment>
<comment type="subunit">
    <text evidence="1">Homodimer.</text>
</comment>
<comment type="similarity">
    <text evidence="1">Belongs to the transketolase family. DXPS subfamily.</text>
</comment>